<keyword id="KW-0963">Cytoplasm</keyword>
<keyword id="KW-0378">Hydrolase</keyword>
<keyword id="KW-0496">Mitochondrion</keyword>
<keyword id="KW-0597">Phosphoprotein</keyword>
<keyword id="KW-1185">Reference proteome</keyword>
<feature type="chain" id="PRO_0000260087" description="ATPase PAAT">
    <location>
        <begin position="1"/>
        <end position="444"/>
    </location>
</feature>
<feature type="region of interest" description="Disordered" evidence="2">
    <location>
        <begin position="424"/>
        <end position="444"/>
    </location>
</feature>
<feature type="compositionally biased region" description="Basic and acidic residues" evidence="2">
    <location>
        <begin position="431"/>
        <end position="444"/>
    </location>
</feature>
<feature type="modified residue" description="Phosphoserine" evidence="1">
    <location>
        <position position="177"/>
    </location>
</feature>
<feature type="modified residue" description="Phosphoserine" evidence="1">
    <location>
        <position position="182"/>
    </location>
</feature>
<feature type="modified residue" description="Phosphoserine" evidence="1">
    <location>
        <position position="254"/>
    </location>
</feature>
<feature type="modified residue" description="Phosphoserine" evidence="1">
    <location>
        <position position="302"/>
    </location>
</feature>
<reference key="1">
    <citation type="journal article" date="2004" name="Genome Res.">
        <title>The status, quality, and expansion of the NIH full-length cDNA project: the Mammalian Gene Collection (MGC).</title>
        <authorList>
            <consortium name="The MGC Project Team"/>
        </authorList>
    </citation>
    <scope>NUCLEOTIDE SEQUENCE [LARGE SCALE MRNA]</scope>
    <source>
        <tissue>Lung</tissue>
    </source>
</reference>
<organism>
    <name type="scientific">Rattus norvegicus</name>
    <name type="common">Rat</name>
    <dbReference type="NCBI Taxonomy" id="10116"/>
    <lineage>
        <taxon>Eukaryota</taxon>
        <taxon>Metazoa</taxon>
        <taxon>Chordata</taxon>
        <taxon>Craniata</taxon>
        <taxon>Vertebrata</taxon>
        <taxon>Euteleostomi</taxon>
        <taxon>Mammalia</taxon>
        <taxon>Eutheria</taxon>
        <taxon>Euarchontoglires</taxon>
        <taxon>Glires</taxon>
        <taxon>Rodentia</taxon>
        <taxon>Myomorpha</taxon>
        <taxon>Muroidea</taxon>
        <taxon>Muridae</taxon>
        <taxon>Murinae</taxon>
        <taxon>Rattus</taxon>
    </lineage>
</organism>
<gene>
    <name evidence="1" type="primary">Paat</name>
</gene>
<proteinExistence type="evidence at transcript level"/>
<name>PAAT_RAT</name>
<accession>Q5XI46</accession>
<comment type="function">
    <text evidence="1">ATPase that regulates mitochondrial ABC transporters ABCB7, ABCB8/MITOSUR and ABCB10. Regulates mitochondrial ferric concentration and heme biosynthesis and plays a role in the maintenance of mitochondrial homeostasis and cell survival.</text>
</comment>
<comment type="catalytic activity">
    <reaction evidence="1">
        <text>ATP + H2O = ADP + phosphate + H(+)</text>
        <dbReference type="Rhea" id="RHEA:13065"/>
        <dbReference type="ChEBI" id="CHEBI:15377"/>
        <dbReference type="ChEBI" id="CHEBI:15378"/>
        <dbReference type="ChEBI" id="CHEBI:30616"/>
        <dbReference type="ChEBI" id="CHEBI:43474"/>
        <dbReference type="ChEBI" id="CHEBI:456216"/>
    </reaction>
    <physiologicalReaction direction="left-to-right" evidence="1">
        <dbReference type="Rhea" id="RHEA:13066"/>
    </physiologicalReaction>
</comment>
<comment type="subunit">
    <text evidence="1">Homodimer. Interacts with ABCB7, ABCB8/MITOSUR and ABCB10.</text>
</comment>
<comment type="subcellular location">
    <subcellularLocation>
        <location evidence="1">Cytoplasm</location>
    </subcellularLocation>
    <subcellularLocation>
        <location evidence="1">Mitochondrion</location>
    </subcellularLocation>
</comment>
<protein>
    <recommendedName>
        <fullName evidence="3">ATPase PAAT</fullName>
        <ecNumber evidence="1">3.6.1.-</ecNumber>
    </recommendedName>
    <alternativeName>
        <fullName evidence="1">Protein associated with ABC transporters</fullName>
        <shortName evidence="1">PAAT</shortName>
    </alternativeName>
</protein>
<dbReference type="EC" id="3.6.1.-" evidence="1"/>
<dbReference type="EMBL" id="BC083846">
    <property type="protein sequence ID" value="AAH83846.1"/>
    <property type="molecule type" value="mRNA"/>
</dbReference>
<dbReference type="RefSeq" id="NP_001014047.1">
    <property type="nucleotide sequence ID" value="NM_001014025.1"/>
</dbReference>
<dbReference type="SMR" id="Q5XI46"/>
<dbReference type="FunCoup" id="Q5XI46">
    <property type="interactions" value="2032"/>
</dbReference>
<dbReference type="STRING" id="10116.ENSRNOP00000027956"/>
<dbReference type="PhosphoSitePlus" id="Q5XI46"/>
<dbReference type="PaxDb" id="10116-ENSRNOP00000027956"/>
<dbReference type="Ensembl" id="ENSRNOT00000027956.7">
    <property type="protein sequence ID" value="ENSRNOP00000027956.4"/>
    <property type="gene ID" value="ENSRNOG00000020597.7"/>
</dbReference>
<dbReference type="GeneID" id="309029"/>
<dbReference type="KEGG" id="rno:309029"/>
<dbReference type="UCSC" id="RGD:1305014">
    <property type="organism name" value="rat"/>
</dbReference>
<dbReference type="AGR" id="RGD:1305014"/>
<dbReference type="CTD" id="309029"/>
<dbReference type="RGD" id="1305014">
    <property type="gene designation" value="C1h10orf88"/>
</dbReference>
<dbReference type="eggNOG" id="ENOG502RUU4">
    <property type="taxonomic scope" value="Eukaryota"/>
</dbReference>
<dbReference type="GeneTree" id="ENSGT00390000017384"/>
<dbReference type="HOGENOM" id="CLU_053533_0_0_1"/>
<dbReference type="InParanoid" id="Q5XI46"/>
<dbReference type="OrthoDB" id="5981473at2759"/>
<dbReference type="PhylomeDB" id="Q5XI46"/>
<dbReference type="TreeFam" id="TF333208"/>
<dbReference type="PRO" id="PR:Q5XI46"/>
<dbReference type="Proteomes" id="UP000002494">
    <property type="component" value="Chromosome 1"/>
</dbReference>
<dbReference type="Bgee" id="ENSRNOG00000020597">
    <property type="expression patterns" value="Expressed in cerebellum and 19 other cell types or tissues"/>
</dbReference>
<dbReference type="GO" id="GO:0005737">
    <property type="term" value="C:cytoplasm"/>
    <property type="evidence" value="ECO:0000250"/>
    <property type="project" value="UniProtKB"/>
</dbReference>
<dbReference type="GO" id="GO:0005739">
    <property type="term" value="C:mitochondrion"/>
    <property type="evidence" value="ECO:0000250"/>
    <property type="project" value="UniProtKB"/>
</dbReference>
<dbReference type="GO" id="GO:0016887">
    <property type="term" value="F:ATP hydrolysis activity"/>
    <property type="evidence" value="ECO:0000250"/>
    <property type="project" value="UniProtKB"/>
</dbReference>
<dbReference type="GO" id="GO:0042802">
    <property type="term" value="F:identical protein binding"/>
    <property type="evidence" value="ECO:0000266"/>
    <property type="project" value="RGD"/>
</dbReference>
<dbReference type="InterPro" id="IPR028043">
    <property type="entry name" value="PAAT-like"/>
</dbReference>
<dbReference type="PANTHER" id="PTHR14787:SF1">
    <property type="entry name" value="ATPASE PAAT"/>
    <property type="match status" value="1"/>
</dbReference>
<dbReference type="PANTHER" id="PTHR14787">
    <property type="entry name" value="C10ORF188 FAMILY MEMBER"/>
    <property type="match status" value="1"/>
</dbReference>
<dbReference type="Pfam" id="PF14958">
    <property type="entry name" value="PAAT-like"/>
    <property type="match status" value="1"/>
</dbReference>
<sequence length="444" mass="48820">METAIEDAGLDRGPTLTSSWDAACGALTQSLFLTRTGPRAQDLDFEQLLAPPAQGPDLVSLKSSLSPRDENPCFIYLKCGPNGGEEILSVGILSSARNMEVYLGEEYCGTSRGKNVCTVLDNSEHEKILLYKKYLKLESPTHACKIKLLSFGEEQCVLISKVVVHLRPRSAKPSPSSPALGSRIDLDNIQTIMESMGSKLSPGAQQLMDMIRFQQQNCLPIRDQLQSVLGTAGHKHLMALQSSPSSGVVDKASSTPFPFRTGLTPSAITENLKALIDKSTQPSGEGNTTNHNECHLMPQNHSLESDLKNAVSSFLPKKASGSSSVPNSELLPFLQNLCSQVNHLRVGHNARWQENVSKPREGTVGVPLEEQPVCSYLEKILSKNMEVMEKKLMKHIDERIYQLQEHIDAKMALLVDLLRSPNSPSPGMPLRHYDSRERLSNGER</sequence>
<evidence type="ECO:0000250" key="1">
    <source>
        <dbReference type="UniProtKB" id="Q9H8K7"/>
    </source>
</evidence>
<evidence type="ECO:0000256" key="2">
    <source>
        <dbReference type="SAM" id="MobiDB-lite"/>
    </source>
</evidence>
<evidence type="ECO:0000305" key="3"/>